<gene>
    <name evidence="1" type="primary">bioB</name>
    <name type="ordered locus">ECUMN_0917</name>
</gene>
<organism>
    <name type="scientific">Escherichia coli O17:K52:H18 (strain UMN026 / ExPEC)</name>
    <dbReference type="NCBI Taxonomy" id="585056"/>
    <lineage>
        <taxon>Bacteria</taxon>
        <taxon>Pseudomonadati</taxon>
        <taxon>Pseudomonadota</taxon>
        <taxon>Gammaproteobacteria</taxon>
        <taxon>Enterobacterales</taxon>
        <taxon>Enterobacteriaceae</taxon>
        <taxon>Escherichia</taxon>
    </lineage>
</organism>
<evidence type="ECO:0000255" key="1">
    <source>
        <dbReference type="HAMAP-Rule" id="MF_01694"/>
    </source>
</evidence>
<evidence type="ECO:0000255" key="2">
    <source>
        <dbReference type="PROSITE-ProRule" id="PRU01266"/>
    </source>
</evidence>
<comment type="function">
    <text evidence="1">Catalyzes the conversion of dethiobiotin (DTB) to biotin by the insertion of a sulfur atom into dethiobiotin via a radical-based mechanism.</text>
</comment>
<comment type="catalytic activity">
    <reaction evidence="1">
        <text>(4R,5S)-dethiobiotin + (sulfur carrier)-SH + 2 reduced [2Fe-2S]-[ferredoxin] + 2 S-adenosyl-L-methionine = (sulfur carrier)-H + biotin + 2 5'-deoxyadenosine + 2 L-methionine + 2 oxidized [2Fe-2S]-[ferredoxin]</text>
        <dbReference type="Rhea" id="RHEA:22060"/>
        <dbReference type="Rhea" id="RHEA-COMP:10000"/>
        <dbReference type="Rhea" id="RHEA-COMP:10001"/>
        <dbReference type="Rhea" id="RHEA-COMP:14737"/>
        <dbReference type="Rhea" id="RHEA-COMP:14739"/>
        <dbReference type="ChEBI" id="CHEBI:17319"/>
        <dbReference type="ChEBI" id="CHEBI:29917"/>
        <dbReference type="ChEBI" id="CHEBI:33737"/>
        <dbReference type="ChEBI" id="CHEBI:33738"/>
        <dbReference type="ChEBI" id="CHEBI:57586"/>
        <dbReference type="ChEBI" id="CHEBI:57844"/>
        <dbReference type="ChEBI" id="CHEBI:59789"/>
        <dbReference type="ChEBI" id="CHEBI:64428"/>
        <dbReference type="ChEBI" id="CHEBI:149473"/>
        <dbReference type="EC" id="2.8.1.6"/>
    </reaction>
</comment>
<comment type="cofactor">
    <cofactor evidence="1">
        <name>[4Fe-4S] cluster</name>
        <dbReference type="ChEBI" id="CHEBI:49883"/>
    </cofactor>
    <text evidence="1">Binds 1 [4Fe-4S] cluster. The cluster is coordinated with 3 cysteines and an exchangeable S-adenosyl-L-methionine.</text>
</comment>
<comment type="cofactor">
    <cofactor evidence="1">
        <name>[2Fe-2S] cluster</name>
        <dbReference type="ChEBI" id="CHEBI:190135"/>
    </cofactor>
    <text evidence="1">Binds 1 [2Fe-2S] cluster. The cluster is coordinated with 3 cysteines and 1 arginine.</text>
</comment>
<comment type="pathway">
    <text evidence="1">Cofactor biosynthesis; biotin biosynthesis; biotin from 7,8-diaminononanoate: step 2/2.</text>
</comment>
<comment type="subunit">
    <text evidence="1">Homodimer.</text>
</comment>
<comment type="similarity">
    <text evidence="1">Belongs to the radical SAM superfamily. Biotin synthase family.</text>
</comment>
<reference key="1">
    <citation type="journal article" date="2009" name="PLoS Genet.">
        <title>Organised genome dynamics in the Escherichia coli species results in highly diverse adaptive paths.</title>
        <authorList>
            <person name="Touchon M."/>
            <person name="Hoede C."/>
            <person name="Tenaillon O."/>
            <person name="Barbe V."/>
            <person name="Baeriswyl S."/>
            <person name="Bidet P."/>
            <person name="Bingen E."/>
            <person name="Bonacorsi S."/>
            <person name="Bouchier C."/>
            <person name="Bouvet O."/>
            <person name="Calteau A."/>
            <person name="Chiapello H."/>
            <person name="Clermont O."/>
            <person name="Cruveiller S."/>
            <person name="Danchin A."/>
            <person name="Diard M."/>
            <person name="Dossat C."/>
            <person name="Karoui M.E."/>
            <person name="Frapy E."/>
            <person name="Garry L."/>
            <person name="Ghigo J.M."/>
            <person name="Gilles A.M."/>
            <person name="Johnson J."/>
            <person name="Le Bouguenec C."/>
            <person name="Lescat M."/>
            <person name="Mangenot S."/>
            <person name="Martinez-Jehanne V."/>
            <person name="Matic I."/>
            <person name="Nassif X."/>
            <person name="Oztas S."/>
            <person name="Petit M.A."/>
            <person name="Pichon C."/>
            <person name="Rouy Z."/>
            <person name="Ruf C.S."/>
            <person name="Schneider D."/>
            <person name="Tourret J."/>
            <person name="Vacherie B."/>
            <person name="Vallenet D."/>
            <person name="Medigue C."/>
            <person name="Rocha E.P.C."/>
            <person name="Denamur E."/>
        </authorList>
    </citation>
    <scope>NUCLEOTIDE SEQUENCE [LARGE SCALE GENOMIC DNA]</scope>
    <source>
        <strain>UMN026 / ExPEC</strain>
    </source>
</reference>
<accession>B7NA74</accession>
<sequence>MAHRPRWTLSQVTELFEKPLLDLLFEAQQVHRQHFDPRQVQVSTLLSIKTGACPEDCKYCPQSSRYKTGLEAERLMEVEQVLESARKAKAAGSTRFCMGAAWKNPHERDMPYLEQMVQGVKAMGLEACMTLGTLSESQAQRLANAGLDYYNHNLDTSPEFYGNIITTRTYQERLDTLEKVRDAGIKVCSGGIVGLGETVKDRAGLLLQLANLPTPPESVPINMLVKVKGTPLADNDDVDAFDFIRTIAVARIMMPTSYVRLSAGREQMNEQTQAMCFMAGANSIFYGCKLLTTPNPEEDKDLQLFRKLGLNPQQTAVLAGDNEQQQRLEQALMTPDTDEYYNAAAL</sequence>
<protein>
    <recommendedName>
        <fullName evidence="1">Biotin synthase</fullName>
        <ecNumber evidence="1">2.8.1.6</ecNumber>
    </recommendedName>
</protein>
<dbReference type="EC" id="2.8.1.6" evidence="1"/>
<dbReference type="EMBL" id="CU928163">
    <property type="protein sequence ID" value="CAR12126.1"/>
    <property type="molecule type" value="Genomic_DNA"/>
</dbReference>
<dbReference type="RefSeq" id="WP_000951213.1">
    <property type="nucleotide sequence ID" value="NC_011751.1"/>
</dbReference>
<dbReference type="RefSeq" id="YP_002411671.1">
    <property type="nucleotide sequence ID" value="NC_011751.1"/>
</dbReference>
<dbReference type="SMR" id="B7NA74"/>
<dbReference type="STRING" id="585056.ECUMN_0917"/>
<dbReference type="GeneID" id="93776655"/>
<dbReference type="KEGG" id="eum:ECUMN_0917"/>
<dbReference type="PATRIC" id="fig|585056.7.peg.1112"/>
<dbReference type="HOGENOM" id="CLU_033172_1_2_6"/>
<dbReference type="UniPathway" id="UPA00078">
    <property type="reaction ID" value="UER00162"/>
</dbReference>
<dbReference type="Proteomes" id="UP000007097">
    <property type="component" value="Chromosome"/>
</dbReference>
<dbReference type="GO" id="GO:0051537">
    <property type="term" value="F:2 iron, 2 sulfur cluster binding"/>
    <property type="evidence" value="ECO:0007669"/>
    <property type="project" value="UniProtKB-KW"/>
</dbReference>
<dbReference type="GO" id="GO:0051539">
    <property type="term" value="F:4 iron, 4 sulfur cluster binding"/>
    <property type="evidence" value="ECO:0007669"/>
    <property type="project" value="UniProtKB-KW"/>
</dbReference>
<dbReference type="GO" id="GO:0004076">
    <property type="term" value="F:biotin synthase activity"/>
    <property type="evidence" value="ECO:0007669"/>
    <property type="project" value="UniProtKB-UniRule"/>
</dbReference>
<dbReference type="GO" id="GO:0005506">
    <property type="term" value="F:iron ion binding"/>
    <property type="evidence" value="ECO:0007669"/>
    <property type="project" value="UniProtKB-UniRule"/>
</dbReference>
<dbReference type="GO" id="GO:0009102">
    <property type="term" value="P:biotin biosynthetic process"/>
    <property type="evidence" value="ECO:0007669"/>
    <property type="project" value="UniProtKB-UniRule"/>
</dbReference>
<dbReference type="CDD" id="cd01335">
    <property type="entry name" value="Radical_SAM"/>
    <property type="match status" value="1"/>
</dbReference>
<dbReference type="FunFam" id="3.20.20.70:FF:000011">
    <property type="entry name" value="Biotin synthase"/>
    <property type="match status" value="1"/>
</dbReference>
<dbReference type="Gene3D" id="3.20.20.70">
    <property type="entry name" value="Aldolase class I"/>
    <property type="match status" value="1"/>
</dbReference>
<dbReference type="HAMAP" id="MF_01694">
    <property type="entry name" value="BioB"/>
    <property type="match status" value="1"/>
</dbReference>
<dbReference type="InterPro" id="IPR013785">
    <property type="entry name" value="Aldolase_TIM"/>
</dbReference>
<dbReference type="InterPro" id="IPR010722">
    <property type="entry name" value="BATS_dom"/>
</dbReference>
<dbReference type="InterPro" id="IPR002684">
    <property type="entry name" value="Biotin_synth/BioAB"/>
</dbReference>
<dbReference type="InterPro" id="IPR024177">
    <property type="entry name" value="Biotin_synthase"/>
</dbReference>
<dbReference type="InterPro" id="IPR006638">
    <property type="entry name" value="Elp3/MiaA/NifB-like_rSAM"/>
</dbReference>
<dbReference type="InterPro" id="IPR007197">
    <property type="entry name" value="rSAM"/>
</dbReference>
<dbReference type="NCBIfam" id="TIGR00433">
    <property type="entry name" value="bioB"/>
    <property type="match status" value="1"/>
</dbReference>
<dbReference type="PANTHER" id="PTHR22976">
    <property type="entry name" value="BIOTIN SYNTHASE"/>
    <property type="match status" value="1"/>
</dbReference>
<dbReference type="PANTHER" id="PTHR22976:SF2">
    <property type="entry name" value="BIOTIN SYNTHASE, MITOCHONDRIAL"/>
    <property type="match status" value="1"/>
</dbReference>
<dbReference type="Pfam" id="PF06968">
    <property type="entry name" value="BATS"/>
    <property type="match status" value="1"/>
</dbReference>
<dbReference type="Pfam" id="PF04055">
    <property type="entry name" value="Radical_SAM"/>
    <property type="match status" value="1"/>
</dbReference>
<dbReference type="PIRSF" id="PIRSF001619">
    <property type="entry name" value="Biotin_synth"/>
    <property type="match status" value="1"/>
</dbReference>
<dbReference type="SFLD" id="SFLDG01060">
    <property type="entry name" value="BATS_domain_containing"/>
    <property type="match status" value="1"/>
</dbReference>
<dbReference type="SFLD" id="SFLDF00272">
    <property type="entry name" value="biotin_synthase"/>
    <property type="match status" value="1"/>
</dbReference>
<dbReference type="SMART" id="SM00876">
    <property type="entry name" value="BATS"/>
    <property type="match status" value="1"/>
</dbReference>
<dbReference type="SMART" id="SM00729">
    <property type="entry name" value="Elp3"/>
    <property type="match status" value="1"/>
</dbReference>
<dbReference type="SUPFAM" id="SSF102114">
    <property type="entry name" value="Radical SAM enzymes"/>
    <property type="match status" value="1"/>
</dbReference>
<dbReference type="PROSITE" id="PS51918">
    <property type="entry name" value="RADICAL_SAM"/>
    <property type="match status" value="1"/>
</dbReference>
<feature type="chain" id="PRO_0000381370" description="Biotin synthase">
    <location>
        <begin position="1"/>
        <end position="346"/>
    </location>
</feature>
<feature type="domain" description="Radical SAM core" evidence="2">
    <location>
        <begin position="38"/>
        <end position="256"/>
    </location>
</feature>
<feature type="binding site" evidence="1">
    <location>
        <position position="53"/>
    </location>
    <ligand>
        <name>[4Fe-4S] cluster</name>
        <dbReference type="ChEBI" id="CHEBI:49883"/>
        <note>4Fe-4S-S-AdoMet</note>
    </ligand>
</feature>
<feature type="binding site" evidence="1">
    <location>
        <position position="57"/>
    </location>
    <ligand>
        <name>[4Fe-4S] cluster</name>
        <dbReference type="ChEBI" id="CHEBI:49883"/>
        <note>4Fe-4S-S-AdoMet</note>
    </ligand>
</feature>
<feature type="binding site" evidence="1">
    <location>
        <position position="60"/>
    </location>
    <ligand>
        <name>[4Fe-4S] cluster</name>
        <dbReference type="ChEBI" id="CHEBI:49883"/>
        <note>4Fe-4S-S-AdoMet</note>
    </ligand>
</feature>
<feature type="binding site" evidence="1">
    <location>
        <position position="97"/>
    </location>
    <ligand>
        <name>[2Fe-2S] cluster</name>
        <dbReference type="ChEBI" id="CHEBI:190135"/>
    </ligand>
</feature>
<feature type="binding site" evidence="1">
    <location>
        <position position="128"/>
    </location>
    <ligand>
        <name>[2Fe-2S] cluster</name>
        <dbReference type="ChEBI" id="CHEBI:190135"/>
    </ligand>
</feature>
<feature type="binding site" evidence="1">
    <location>
        <position position="188"/>
    </location>
    <ligand>
        <name>[2Fe-2S] cluster</name>
        <dbReference type="ChEBI" id="CHEBI:190135"/>
    </ligand>
</feature>
<feature type="binding site" evidence="1">
    <location>
        <position position="260"/>
    </location>
    <ligand>
        <name>[2Fe-2S] cluster</name>
        <dbReference type="ChEBI" id="CHEBI:190135"/>
    </ligand>
</feature>
<proteinExistence type="inferred from homology"/>
<keyword id="KW-0001">2Fe-2S</keyword>
<keyword id="KW-0004">4Fe-4S</keyword>
<keyword id="KW-0093">Biotin biosynthesis</keyword>
<keyword id="KW-0408">Iron</keyword>
<keyword id="KW-0411">Iron-sulfur</keyword>
<keyword id="KW-0479">Metal-binding</keyword>
<keyword id="KW-0949">S-adenosyl-L-methionine</keyword>
<keyword id="KW-0808">Transferase</keyword>
<name>BIOB_ECOLU</name>